<protein>
    <recommendedName>
        <fullName evidence="1">ATP synthase subunit alpha</fullName>
        <ecNumber evidence="1">7.1.2.2</ecNumber>
    </recommendedName>
    <alternativeName>
        <fullName evidence="1">ATP synthase F1 sector subunit alpha</fullName>
    </alternativeName>
    <alternativeName>
        <fullName evidence="1">F-ATPase subunit alpha</fullName>
    </alternativeName>
</protein>
<comment type="function">
    <text evidence="1">Produces ATP from ADP in the presence of a proton gradient across the membrane. The alpha chain is a regulatory subunit.</text>
</comment>
<comment type="catalytic activity">
    <reaction evidence="1">
        <text>ATP + H2O + 4 H(+)(in) = ADP + phosphate + 5 H(+)(out)</text>
        <dbReference type="Rhea" id="RHEA:57720"/>
        <dbReference type="ChEBI" id="CHEBI:15377"/>
        <dbReference type="ChEBI" id="CHEBI:15378"/>
        <dbReference type="ChEBI" id="CHEBI:30616"/>
        <dbReference type="ChEBI" id="CHEBI:43474"/>
        <dbReference type="ChEBI" id="CHEBI:456216"/>
        <dbReference type="EC" id="7.1.2.2"/>
    </reaction>
</comment>
<comment type="subunit">
    <text evidence="1">F-type ATPases have 2 components, CF(1) - the catalytic core - and CF(0) - the membrane proton channel. CF(1) has five subunits: alpha(3), beta(3), gamma(1), delta(1), epsilon(1). CF(0) has three main subunits: a(1), b(2) and c(9-12). The alpha and beta chains form an alternating ring which encloses part of the gamma chain. CF(1) is attached to CF(0) by a central stalk formed by the gamma and epsilon chains, while a peripheral stalk is formed by the delta and b chains.</text>
</comment>
<comment type="subcellular location">
    <subcellularLocation>
        <location evidence="1">Cell inner membrane</location>
        <topology evidence="1">Peripheral membrane protein</topology>
    </subcellularLocation>
</comment>
<comment type="similarity">
    <text evidence="1">Belongs to the ATPase alpha/beta chains family.</text>
</comment>
<evidence type="ECO:0000255" key="1">
    <source>
        <dbReference type="HAMAP-Rule" id="MF_01346"/>
    </source>
</evidence>
<proteinExistence type="inferred from homology"/>
<sequence length="513" mass="55791">MQLNSTEISELIKKRIAQFEVINEARNTGTIVSVSDGIIRIHGLSDVMQGEMIALPGNRYAMALNLERDSVGAVVMGPYSDLAEGMEVQCTGRILEVPVGRGLLGRVVNTLGQPIDGKGEIKNDGFSPVEVIAPGVIERKSVDQPVQTGYKAVDSMVPIGRGQRELIIGDRQTGKTALAIDAIINQRDSGIKCIYVAIGQKASTIANVVRKLEEHGALQNTIVVVASASESAALQYLAPYSGCAMGEYFRDRGEDALIVYDDLSKQAVAYRQISLLLRRPPGREAFPGDVFYLHSRLLERASRVSEEYVEKFTKGEVKGKTGSLTALPIIETQAGDVSAFVPTNVISITDGQIFLESNLFNSGIRPAVNPGISVSRVGGAAQTKVVKKLAGGIRTALAQYRELAAFAQFASDLDEATRKQLSHGQKVTELLKQKQYSPLSVAEQALVLFAVEFGYLDDVELNRIGTFETALLEYANYNYADFMAELTKTGNYDDEIKNTLKTVLDQFKANVAW</sequence>
<feature type="chain" id="PRO_1000143388" description="ATP synthase subunit alpha">
    <location>
        <begin position="1"/>
        <end position="513"/>
    </location>
</feature>
<feature type="binding site" evidence="1">
    <location>
        <begin position="169"/>
        <end position="176"/>
    </location>
    <ligand>
        <name>ATP</name>
        <dbReference type="ChEBI" id="CHEBI:30616"/>
    </ligand>
</feature>
<feature type="site" description="Required for activity" evidence="1">
    <location>
        <position position="373"/>
    </location>
</feature>
<dbReference type="EC" id="7.1.2.2" evidence="1"/>
<dbReference type="EMBL" id="CP000947">
    <property type="protein sequence ID" value="ACA31641.1"/>
    <property type="molecule type" value="Genomic_DNA"/>
</dbReference>
<dbReference type="RefSeq" id="WP_011609842.1">
    <property type="nucleotide sequence ID" value="NC_010519.1"/>
</dbReference>
<dbReference type="SMR" id="B0UWG7"/>
<dbReference type="STRING" id="228400.HSM_1852"/>
<dbReference type="GeneID" id="31488159"/>
<dbReference type="KEGG" id="hsm:HSM_1852"/>
<dbReference type="HOGENOM" id="CLU_010091_2_1_6"/>
<dbReference type="GO" id="GO:0005886">
    <property type="term" value="C:plasma membrane"/>
    <property type="evidence" value="ECO:0007669"/>
    <property type="project" value="UniProtKB-SubCell"/>
</dbReference>
<dbReference type="GO" id="GO:0045259">
    <property type="term" value="C:proton-transporting ATP synthase complex"/>
    <property type="evidence" value="ECO:0007669"/>
    <property type="project" value="UniProtKB-KW"/>
</dbReference>
<dbReference type="GO" id="GO:0043531">
    <property type="term" value="F:ADP binding"/>
    <property type="evidence" value="ECO:0007669"/>
    <property type="project" value="TreeGrafter"/>
</dbReference>
<dbReference type="GO" id="GO:0005524">
    <property type="term" value="F:ATP binding"/>
    <property type="evidence" value="ECO:0007669"/>
    <property type="project" value="UniProtKB-UniRule"/>
</dbReference>
<dbReference type="GO" id="GO:0046933">
    <property type="term" value="F:proton-transporting ATP synthase activity, rotational mechanism"/>
    <property type="evidence" value="ECO:0007669"/>
    <property type="project" value="UniProtKB-UniRule"/>
</dbReference>
<dbReference type="CDD" id="cd18113">
    <property type="entry name" value="ATP-synt_F1_alpha_C"/>
    <property type="match status" value="1"/>
</dbReference>
<dbReference type="CDD" id="cd18116">
    <property type="entry name" value="ATP-synt_F1_alpha_N"/>
    <property type="match status" value="1"/>
</dbReference>
<dbReference type="CDD" id="cd01132">
    <property type="entry name" value="F1-ATPase_alpha_CD"/>
    <property type="match status" value="1"/>
</dbReference>
<dbReference type="FunFam" id="1.20.150.20:FF:000001">
    <property type="entry name" value="ATP synthase subunit alpha"/>
    <property type="match status" value="1"/>
</dbReference>
<dbReference type="FunFam" id="2.40.30.20:FF:000001">
    <property type="entry name" value="ATP synthase subunit alpha"/>
    <property type="match status" value="1"/>
</dbReference>
<dbReference type="FunFam" id="3.40.50.300:FF:000002">
    <property type="entry name" value="ATP synthase subunit alpha"/>
    <property type="match status" value="1"/>
</dbReference>
<dbReference type="Gene3D" id="2.40.30.20">
    <property type="match status" value="1"/>
</dbReference>
<dbReference type="Gene3D" id="1.20.150.20">
    <property type="entry name" value="ATP synthase alpha/beta chain, C-terminal domain"/>
    <property type="match status" value="1"/>
</dbReference>
<dbReference type="Gene3D" id="3.40.50.300">
    <property type="entry name" value="P-loop containing nucleotide triphosphate hydrolases"/>
    <property type="match status" value="1"/>
</dbReference>
<dbReference type="HAMAP" id="MF_01346">
    <property type="entry name" value="ATP_synth_alpha_bact"/>
    <property type="match status" value="1"/>
</dbReference>
<dbReference type="InterPro" id="IPR023366">
    <property type="entry name" value="ATP_synth_asu-like_sf"/>
</dbReference>
<dbReference type="InterPro" id="IPR000793">
    <property type="entry name" value="ATP_synth_asu_C"/>
</dbReference>
<dbReference type="InterPro" id="IPR038376">
    <property type="entry name" value="ATP_synth_asu_C_sf"/>
</dbReference>
<dbReference type="InterPro" id="IPR033732">
    <property type="entry name" value="ATP_synth_F1_a_nt-bd_dom"/>
</dbReference>
<dbReference type="InterPro" id="IPR005294">
    <property type="entry name" value="ATP_synth_F1_asu"/>
</dbReference>
<dbReference type="InterPro" id="IPR020003">
    <property type="entry name" value="ATPase_a/bsu_AS"/>
</dbReference>
<dbReference type="InterPro" id="IPR004100">
    <property type="entry name" value="ATPase_F1/V1/A1_a/bsu_N"/>
</dbReference>
<dbReference type="InterPro" id="IPR036121">
    <property type="entry name" value="ATPase_F1/V1/A1_a/bsu_N_sf"/>
</dbReference>
<dbReference type="InterPro" id="IPR000194">
    <property type="entry name" value="ATPase_F1/V1/A1_a/bsu_nucl-bd"/>
</dbReference>
<dbReference type="InterPro" id="IPR027417">
    <property type="entry name" value="P-loop_NTPase"/>
</dbReference>
<dbReference type="NCBIfam" id="TIGR00962">
    <property type="entry name" value="atpA"/>
    <property type="match status" value="1"/>
</dbReference>
<dbReference type="NCBIfam" id="NF009884">
    <property type="entry name" value="PRK13343.1"/>
    <property type="match status" value="1"/>
</dbReference>
<dbReference type="PANTHER" id="PTHR48082">
    <property type="entry name" value="ATP SYNTHASE SUBUNIT ALPHA, MITOCHONDRIAL"/>
    <property type="match status" value="1"/>
</dbReference>
<dbReference type="PANTHER" id="PTHR48082:SF2">
    <property type="entry name" value="ATP SYNTHASE SUBUNIT ALPHA, MITOCHONDRIAL"/>
    <property type="match status" value="1"/>
</dbReference>
<dbReference type="Pfam" id="PF00006">
    <property type="entry name" value="ATP-synt_ab"/>
    <property type="match status" value="1"/>
</dbReference>
<dbReference type="Pfam" id="PF00306">
    <property type="entry name" value="ATP-synt_ab_C"/>
    <property type="match status" value="1"/>
</dbReference>
<dbReference type="Pfam" id="PF02874">
    <property type="entry name" value="ATP-synt_ab_N"/>
    <property type="match status" value="1"/>
</dbReference>
<dbReference type="PIRSF" id="PIRSF039088">
    <property type="entry name" value="F_ATPase_subunit_alpha"/>
    <property type="match status" value="1"/>
</dbReference>
<dbReference type="SUPFAM" id="SSF47917">
    <property type="entry name" value="C-terminal domain of alpha and beta subunits of F1 ATP synthase"/>
    <property type="match status" value="1"/>
</dbReference>
<dbReference type="SUPFAM" id="SSF50615">
    <property type="entry name" value="N-terminal domain of alpha and beta subunits of F1 ATP synthase"/>
    <property type="match status" value="1"/>
</dbReference>
<dbReference type="SUPFAM" id="SSF52540">
    <property type="entry name" value="P-loop containing nucleoside triphosphate hydrolases"/>
    <property type="match status" value="1"/>
</dbReference>
<dbReference type="PROSITE" id="PS00152">
    <property type="entry name" value="ATPASE_ALPHA_BETA"/>
    <property type="match status" value="1"/>
</dbReference>
<reference key="1">
    <citation type="submission" date="2008-02" db="EMBL/GenBank/DDBJ databases">
        <title>Complete sequence of Haemophilus somnus 2336.</title>
        <authorList>
            <consortium name="US DOE Joint Genome Institute"/>
            <person name="Siddaramappa S."/>
            <person name="Duncan A.J."/>
            <person name="Challacombe J.F."/>
            <person name="Rainey D."/>
            <person name="Gillaspy A.F."/>
            <person name="Carson M."/>
            <person name="Gipson J."/>
            <person name="Gipson M."/>
            <person name="Bruce D."/>
            <person name="Detter J.C."/>
            <person name="Han C.S."/>
            <person name="Land M."/>
            <person name="Tapia R."/>
            <person name="Thompson L.S."/>
            <person name="Orvis J."/>
            <person name="Zaitshik J."/>
            <person name="Barnes G."/>
            <person name="Brettin T.S."/>
            <person name="Dyer D.W."/>
            <person name="Inzana T.J."/>
        </authorList>
    </citation>
    <scope>NUCLEOTIDE SEQUENCE [LARGE SCALE GENOMIC DNA]</scope>
    <source>
        <strain>2336</strain>
    </source>
</reference>
<gene>
    <name evidence="1" type="primary">atpA</name>
    <name type="ordered locus">HSM_1852</name>
</gene>
<name>ATPA_HISS2</name>
<accession>B0UWG7</accession>
<organism>
    <name type="scientific">Histophilus somni (strain 2336)</name>
    <name type="common">Haemophilus somnus</name>
    <dbReference type="NCBI Taxonomy" id="228400"/>
    <lineage>
        <taxon>Bacteria</taxon>
        <taxon>Pseudomonadati</taxon>
        <taxon>Pseudomonadota</taxon>
        <taxon>Gammaproteobacteria</taxon>
        <taxon>Pasteurellales</taxon>
        <taxon>Pasteurellaceae</taxon>
        <taxon>Histophilus</taxon>
    </lineage>
</organism>
<keyword id="KW-0066">ATP synthesis</keyword>
<keyword id="KW-0067">ATP-binding</keyword>
<keyword id="KW-0997">Cell inner membrane</keyword>
<keyword id="KW-1003">Cell membrane</keyword>
<keyword id="KW-0139">CF(1)</keyword>
<keyword id="KW-0375">Hydrogen ion transport</keyword>
<keyword id="KW-0406">Ion transport</keyword>
<keyword id="KW-0472">Membrane</keyword>
<keyword id="KW-0547">Nucleotide-binding</keyword>
<keyword id="KW-1278">Translocase</keyword>
<keyword id="KW-0813">Transport</keyword>